<dbReference type="EMBL" id="CR382126">
    <property type="protein sequence ID" value="CAG97847.1"/>
    <property type="molecule type" value="Genomic_DNA"/>
</dbReference>
<dbReference type="RefSeq" id="XP_455140.1">
    <property type="nucleotide sequence ID" value="XM_455140.1"/>
</dbReference>
<dbReference type="SMR" id="Q6CLP9"/>
<dbReference type="FunCoup" id="Q6CLP9">
    <property type="interactions" value="138"/>
</dbReference>
<dbReference type="STRING" id="284590.Q6CLP9"/>
<dbReference type="PaxDb" id="284590-Q6CLP9"/>
<dbReference type="KEGG" id="kla:KLLA0_F01342g"/>
<dbReference type="eggNOG" id="ENOG502QWEK">
    <property type="taxonomic scope" value="Eukaryota"/>
</dbReference>
<dbReference type="HOGENOM" id="CLU_044760_0_0_1"/>
<dbReference type="InParanoid" id="Q6CLP9"/>
<dbReference type="OMA" id="YMEQMVL"/>
<dbReference type="Proteomes" id="UP000000598">
    <property type="component" value="Chromosome F"/>
</dbReference>
<dbReference type="GO" id="GO:0005737">
    <property type="term" value="C:cytoplasm"/>
    <property type="evidence" value="ECO:0007669"/>
    <property type="project" value="UniProtKB-SubCell"/>
</dbReference>
<dbReference type="GO" id="GO:0006281">
    <property type="term" value="P:DNA repair"/>
    <property type="evidence" value="ECO:0007669"/>
    <property type="project" value="UniProtKB-KW"/>
</dbReference>
<dbReference type="CDD" id="cd12794">
    <property type="entry name" value="Hsm3_like"/>
    <property type="match status" value="1"/>
</dbReference>
<dbReference type="Gene3D" id="1.25.10.50">
    <property type="match status" value="1"/>
</dbReference>
<dbReference type="Gene3D" id="1.25.40.580">
    <property type="match status" value="1"/>
</dbReference>
<dbReference type="InterPro" id="IPR040752">
    <property type="entry name" value="HSM3_C"/>
</dbReference>
<dbReference type="InterPro" id="IPR041335">
    <property type="entry name" value="HSM3_N"/>
</dbReference>
<dbReference type="Pfam" id="PF18794">
    <property type="entry name" value="HSM3_C"/>
    <property type="match status" value="1"/>
</dbReference>
<dbReference type="Pfam" id="PF18795">
    <property type="entry name" value="HSM3_N"/>
    <property type="match status" value="1"/>
</dbReference>
<protein>
    <recommendedName>
        <fullName>DNA mismatch repair protein HSM3</fullName>
    </recommendedName>
</protein>
<feature type="chain" id="PRO_0000301759" description="DNA mismatch repair protein HSM3">
    <location>
        <begin position="1"/>
        <end position="469"/>
    </location>
</feature>
<comment type="function">
    <text evidence="1">Involved in DNA mismatch repair in slow-growing cells. Acts as a chaperone during the assembly of the 26S proteasome, specifically of the base subcomplex of the 19S regulatory complex (RC) (By similarity).</text>
</comment>
<comment type="subcellular location">
    <subcellularLocation>
        <location evidence="1">Cytoplasm</location>
    </subcellularLocation>
</comment>
<comment type="similarity">
    <text evidence="2">Belongs to the proteasome subunit S5B/HSM3 family.</text>
</comment>
<reference key="1">
    <citation type="journal article" date="2004" name="Nature">
        <title>Genome evolution in yeasts.</title>
        <authorList>
            <person name="Dujon B."/>
            <person name="Sherman D."/>
            <person name="Fischer G."/>
            <person name="Durrens P."/>
            <person name="Casaregola S."/>
            <person name="Lafontaine I."/>
            <person name="de Montigny J."/>
            <person name="Marck C."/>
            <person name="Neuveglise C."/>
            <person name="Talla E."/>
            <person name="Goffard N."/>
            <person name="Frangeul L."/>
            <person name="Aigle M."/>
            <person name="Anthouard V."/>
            <person name="Babour A."/>
            <person name="Barbe V."/>
            <person name="Barnay S."/>
            <person name="Blanchin S."/>
            <person name="Beckerich J.-M."/>
            <person name="Beyne E."/>
            <person name="Bleykasten C."/>
            <person name="Boisrame A."/>
            <person name="Boyer J."/>
            <person name="Cattolico L."/>
            <person name="Confanioleri F."/>
            <person name="de Daruvar A."/>
            <person name="Despons L."/>
            <person name="Fabre E."/>
            <person name="Fairhead C."/>
            <person name="Ferry-Dumazet H."/>
            <person name="Groppi A."/>
            <person name="Hantraye F."/>
            <person name="Hennequin C."/>
            <person name="Jauniaux N."/>
            <person name="Joyet P."/>
            <person name="Kachouri R."/>
            <person name="Kerrest A."/>
            <person name="Koszul R."/>
            <person name="Lemaire M."/>
            <person name="Lesur I."/>
            <person name="Ma L."/>
            <person name="Muller H."/>
            <person name="Nicaud J.-M."/>
            <person name="Nikolski M."/>
            <person name="Oztas S."/>
            <person name="Ozier-Kalogeropoulos O."/>
            <person name="Pellenz S."/>
            <person name="Potier S."/>
            <person name="Richard G.-F."/>
            <person name="Straub M.-L."/>
            <person name="Suleau A."/>
            <person name="Swennen D."/>
            <person name="Tekaia F."/>
            <person name="Wesolowski-Louvel M."/>
            <person name="Westhof E."/>
            <person name="Wirth B."/>
            <person name="Zeniou-Meyer M."/>
            <person name="Zivanovic Y."/>
            <person name="Bolotin-Fukuhara M."/>
            <person name="Thierry A."/>
            <person name="Bouchier C."/>
            <person name="Caudron B."/>
            <person name="Scarpelli C."/>
            <person name="Gaillardin C."/>
            <person name="Weissenbach J."/>
            <person name="Wincker P."/>
            <person name="Souciet J.-L."/>
        </authorList>
    </citation>
    <scope>NUCLEOTIDE SEQUENCE [LARGE SCALE GENOMIC DNA]</scope>
    <source>
        <strain>ATCC 8585 / CBS 2359 / DSM 70799 / NBRC 1267 / NRRL Y-1140 / WM37</strain>
    </source>
</reference>
<sequence length="469" mass="53498">MTDVTKDIDNLADALLTMEISPEINDLMEKLALNLTSSNNLPVDVKHLLTSIKTYLTQSSSEMLDYNLLLEVLDAVVGLCPFEDVLKVFSVDDLITALKSGDKALTETVCQVIAAASPRDIFAGTPLLDEMLKLYFCESTVVAIVNALEKTLGILVTNQLNRRRILENNLPVLISVKDCKNSTTFCRFLDLIKILSASVTFEEFRKDIFIIDNMVTNKMMENDILVFIHICQYYIELLTISLTEDGKEWVIRYVKPSFEIFGEAFSRREELFDVGHFAKSYLLTLFSKISYLDDKSYIQLLEAQFFPLYPDKQYLDEFLTVLDPSYIAKVHLDLLKEKALRAGNVHMFVNLIKDEDCFVQLKDEINSKTLNDMPYIEKMLLLDGLTLTSYGIQHLTRNMPSVMNSIIDSGNQVTEKLSFDLRLRVFENLLEANPQELSVWLIPLQSEYANILNGRRGRFSSGQLADDYL</sequence>
<evidence type="ECO:0000250" key="1"/>
<evidence type="ECO:0000305" key="2"/>
<gene>
    <name type="primary">HSM3</name>
    <name type="ordered locus">KLLA0F01342g</name>
</gene>
<proteinExistence type="inferred from homology"/>
<organism>
    <name type="scientific">Kluyveromyces lactis (strain ATCC 8585 / CBS 2359 / DSM 70799 / NBRC 1267 / NRRL Y-1140 / WM37)</name>
    <name type="common">Yeast</name>
    <name type="synonym">Candida sphaerica</name>
    <dbReference type="NCBI Taxonomy" id="284590"/>
    <lineage>
        <taxon>Eukaryota</taxon>
        <taxon>Fungi</taxon>
        <taxon>Dikarya</taxon>
        <taxon>Ascomycota</taxon>
        <taxon>Saccharomycotina</taxon>
        <taxon>Saccharomycetes</taxon>
        <taxon>Saccharomycetales</taxon>
        <taxon>Saccharomycetaceae</taxon>
        <taxon>Kluyveromyces</taxon>
    </lineage>
</organism>
<keyword id="KW-0143">Chaperone</keyword>
<keyword id="KW-0963">Cytoplasm</keyword>
<keyword id="KW-0227">DNA damage</keyword>
<keyword id="KW-0234">DNA repair</keyword>
<keyword id="KW-1185">Reference proteome</keyword>
<name>HSM3_KLULA</name>
<accession>Q6CLP9</accession>